<gene>
    <name evidence="1" type="primary">rplR</name>
    <name type="ordered locus">UTI89_C3751</name>
</gene>
<evidence type="ECO:0000255" key="1">
    <source>
        <dbReference type="HAMAP-Rule" id="MF_01337"/>
    </source>
</evidence>
<evidence type="ECO:0000305" key="2"/>
<sequence>MDKKSARIRRATRARRKLQELGATRLVVHRTPRHIYAQVIAPNGSEVLVAASTVEKAIAEQLKYTGNKDAAAAVGKAVAERALEKGIKDVSFDRSGFQYHGRVQALADAAREAGLQF</sequence>
<accession>Q1R626</accession>
<feature type="chain" id="PRO_0000251312" description="Large ribosomal subunit protein uL18">
    <location>
        <begin position="1"/>
        <end position="117"/>
    </location>
</feature>
<comment type="function">
    <text evidence="1">This is one of the proteins that bind and probably mediate the attachment of the 5S RNA into the large ribosomal subunit, where it forms part of the central protuberance.</text>
</comment>
<comment type="subunit">
    <text evidence="1">Part of the 50S ribosomal subunit; part of the 5S rRNA/L5/L18/L25 subcomplex. Contacts the 5S and 23S rRNAs.</text>
</comment>
<comment type="similarity">
    <text evidence="1">Belongs to the universal ribosomal protein uL18 family.</text>
</comment>
<dbReference type="EMBL" id="CP000243">
    <property type="protein sequence ID" value="ABE09188.1"/>
    <property type="molecule type" value="Genomic_DNA"/>
</dbReference>
<dbReference type="RefSeq" id="WP_000358960.1">
    <property type="nucleotide sequence ID" value="NZ_CP064825.1"/>
</dbReference>
<dbReference type="SMR" id="Q1R626"/>
<dbReference type="GeneID" id="98390426"/>
<dbReference type="KEGG" id="eci:UTI89_C3751"/>
<dbReference type="HOGENOM" id="CLU_098841_0_1_6"/>
<dbReference type="Proteomes" id="UP000001952">
    <property type="component" value="Chromosome"/>
</dbReference>
<dbReference type="GO" id="GO:0022625">
    <property type="term" value="C:cytosolic large ribosomal subunit"/>
    <property type="evidence" value="ECO:0007669"/>
    <property type="project" value="TreeGrafter"/>
</dbReference>
<dbReference type="GO" id="GO:0008097">
    <property type="term" value="F:5S rRNA binding"/>
    <property type="evidence" value="ECO:0007669"/>
    <property type="project" value="TreeGrafter"/>
</dbReference>
<dbReference type="GO" id="GO:0003735">
    <property type="term" value="F:structural constituent of ribosome"/>
    <property type="evidence" value="ECO:0007669"/>
    <property type="project" value="InterPro"/>
</dbReference>
<dbReference type="GO" id="GO:0006412">
    <property type="term" value="P:translation"/>
    <property type="evidence" value="ECO:0007669"/>
    <property type="project" value="UniProtKB-UniRule"/>
</dbReference>
<dbReference type="CDD" id="cd00432">
    <property type="entry name" value="Ribosomal_L18_L5e"/>
    <property type="match status" value="1"/>
</dbReference>
<dbReference type="FunFam" id="3.30.420.100:FF:000001">
    <property type="entry name" value="50S ribosomal protein L18"/>
    <property type="match status" value="1"/>
</dbReference>
<dbReference type="Gene3D" id="3.30.420.100">
    <property type="match status" value="1"/>
</dbReference>
<dbReference type="HAMAP" id="MF_01337_B">
    <property type="entry name" value="Ribosomal_uL18_B"/>
    <property type="match status" value="1"/>
</dbReference>
<dbReference type="InterPro" id="IPR004389">
    <property type="entry name" value="Ribosomal_uL18_bac-type"/>
</dbReference>
<dbReference type="InterPro" id="IPR005484">
    <property type="entry name" value="Ribosomal_uL18_bac/euk"/>
</dbReference>
<dbReference type="NCBIfam" id="TIGR00060">
    <property type="entry name" value="L18_bact"/>
    <property type="match status" value="1"/>
</dbReference>
<dbReference type="PANTHER" id="PTHR12899">
    <property type="entry name" value="39S RIBOSOMAL PROTEIN L18, MITOCHONDRIAL"/>
    <property type="match status" value="1"/>
</dbReference>
<dbReference type="PANTHER" id="PTHR12899:SF3">
    <property type="entry name" value="LARGE RIBOSOMAL SUBUNIT PROTEIN UL18M"/>
    <property type="match status" value="1"/>
</dbReference>
<dbReference type="Pfam" id="PF00861">
    <property type="entry name" value="Ribosomal_L18p"/>
    <property type="match status" value="1"/>
</dbReference>
<dbReference type="SUPFAM" id="SSF53137">
    <property type="entry name" value="Translational machinery components"/>
    <property type="match status" value="1"/>
</dbReference>
<keyword id="KW-0687">Ribonucleoprotein</keyword>
<keyword id="KW-0689">Ribosomal protein</keyword>
<keyword id="KW-0694">RNA-binding</keyword>
<keyword id="KW-0699">rRNA-binding</keyword>
<proteinExistence type="inferred from homology"/>
<name>RL18_ECOUT</name>
<protein>
    <recommendedName>
        <fullName evidence="1">Large ribosomal subunit protein uL18</fullName>
    </recommendedName>
    <alternativeName>
        <fullName evidence="2">50S ribosomal protein L18</fullName>
    </alternativeName>
</protein>
<reference key="1">
    <citation type="journal article" date="2006" name="Proc. Natl. Acad. Sci. U.S.A.">
        <title>Identification of genes subject to positive selection in uropathogenic strains of Escherichia coli: a comparative genomics approach.</title>
        <authorList>
            <person name="Chen S.L."/>
            <person name="Hung C.-S."/>
            <person name="Xu J."/>
            <person name="Reigstad C.S."/>
            <person name="Magrini V."/>
            <person name="Sabo A."/>
            <person name="Blasiar D."/>
            <person name="Bieri T."/>
            <person name="Meyer R.R."/>
            <person name="Ozersky P."/>
            <person name="Armstrong J.R."/>
            <person name="Fulton R.S."/>
            <person name="Latreille J.P."/>
            <person name="Spieth J."/>
            <person name="Hooton T.M."/>
            <person name="Mardis E.R."/>
            <person name="Hultgren S.J."/>
            <person name="Gordon J.I."/>
        </authorList>
    </citation>
    <scope>NUCLEOTIDE SEQUENCE [LARGE SCALE GENOMIC DNA]</scope>
    <source>
        <strain>UTI89 / UPEC</strain>
    </source>
</reference>
<organism>
    <name type="scientific">Escherichia coli (strain UTI89 / UPEC)</name>
    <dbReference type="NCBI Taxonomy" id="364106"/>
    <lineage>
        <taxon>Bacteria</taxon>
        <taxon>Pseudomonadati</taxon>
        <taxon>Pseudomonadota</taxon>
        <taxon>Gammaproteobacteria</taxon>
        <taxon>Enterobacterales</taxon>
        <taxon>Enterobacteriaceae</taxon>
        <taxon>Escherichia</taxon>
    </lineage>
</organism>